<evidence type="ECO:0000255" key="1">
    <source>
        <dbReference type="HAMAP-Rule" id="MF_01600"/>
    </source>
</evidence>
<evidence type="ECO:0000256" key="2">
    <source>
        <dbReference type="SAM" id="MobiDB-lite"/>
    </source>
</evidence>
<accession>A1A139</accession>
<proteinExistence type="inferred from homology"/>
<reference key="1">
    <citation type="submission" date="2006-12" db="EMBL/GenBank/DDBJ databases">
        <title>Bifidobacterium adolescentis complete genome sequence.</title>
        <authorList>
            <person name="Suzuki T."/>
            <person name="Tsuda Y."/>
            <person name="Kanou N."/>
            <person name="Inoue T."/>
            <person name="Kumazaki K."/>
            <person name="Nagano S."/>
            <person name="Hirai S."/>
            <person name="Tanaka K."/>
            <person name="Watanabe K."/>
        </authorList>
    </citation>
    <scope>NUCLEOTIDE SEQUENCE [LARGE SCALE GENOMIC DNA]</scope>
    <source>
        <strain>ATCC 15703 / DSM 20083 / NCTC 11814 / E194a</strain>
    </source>
</reference>
<gene>
    <name type="ordered locus">BAD_0641</name>
</gene>
<sequence>MSFFDMFGPMFDPEGGSNRAGRQNPRKPSNDDPIILNVETDGGDGPQPSSNVPPKRPSGPRITSKPNRPRKPSNGSKIFIGVVLALAIVIGLFFALAQFVTDVMWYSQLGFQSVIWTQLGTRVGLWLAYAVLIAAVGFISATLAIWARPDAADGSTIRVNGDTIEIGKSVSSKSARRIAVVISLIVGLVFGSQFNANWSEILLMFNSQSFGTKDPQFGIDNGFYVFVLPGLKLIMSAVSLLLLAGIIFSIVTHVLMGGIRITMPVNGHGLFRITKRARRQIGIWLMLNMFAWAANQVLGVFSHLTEEGSRITGATYTTVNATIPVTFIMAAITAILGVILGLWIMKSHTLEGSAPIAARASEALKAWKVPTVAIASAIVVSLVLTVAWPVLLQRFRVNPNAQEMESTYIQRNIDATRAAYGLDKVKAEQYKATTEGEEGALADSAESTAQIRLLDPQIISPTFKQLQQSKQYYTFADTVAVDKYDVDGVSQDTVIAARELDLDGLDNRNWVNDHTVYTHGYGVVAAYGNKVTADGQPKFFEAGIPTQGKLTDSEKYEPRIYFSPNATEYSIVGAPEGTKSWEFDYPTGSEGATNTFKGDGGPKIGNIFSRLLYAIRFGSDQILFSNRVNSNSQILYDRSPKERVAKVAPYLTLDGRVYPAVVDGRVKWIVDGYTTSDAYPYSQMTDLGEATKDSTTESSDTVSSLNSKNANYIRNSVKATVDAYDGSVDLYVWDQSDPVVKAWEKIFPGQYHQLSEISGDLMSHMRYPESLFKVQRELLAKYHVSSANQFFSGEDFWQTPVDPTESQQAQQRDILQPPYYLTLQTGGSSEPVFSLTSSYIPAGSSTREILTGFLSVDSDAGHEKGKIGSSYGTIRLQELPKDSNVPGPGQAQNNFNASADVSKELNLLESGSTNVQRGNLLTLPLGGGLVYVQPVYVKSSGSTSFPLLKKVLVAFGDQVGFADTLDEALDQVFGGDSGASAGDAENVGDTTDDKQDAKNDDSADGKTNTDGKQDTPSNTDGKTGGNNGDSSGTMSADLKKALDDAAQAMKDSDAAMKKGDWSAYGDAQKQLQEALNKAIELEQ</sequence>
<feature type="chain" id="PRO_0000291272" description="UPF0182 protein BAD_0641">
    <location>
        <begin position="1"/>
        <end position="1083"/>
    </location>
</feature>
<feature type="transmembrane region" description="Helical" evidence="1">
    <location>
        <begin position="78"/>
        <end position="98"/>
    </location>
</feature>
<feature type="transmembrane region" description="Helical" evidence="1">
    <location>
        <begin position="125"/>
        <end position="145"/>
    </location>
</feature>
<feature type="transmembrane region" description="Helical" evidence="1">
    <location>
        <begin position="178"/>
        <end position="198"/>
    </location>
</feature>
<feature type="transmembrane region" description="Helical" evidence="1">
    <location>
        <begin position="239"/>
        <end position="259"/>
    </location>
</feature>
<feature type="transmembrane region" description="Helical" evidence="1">
    <location>
        <begin position="281"/>
        <end position="301"/>
    </location>
</feature>
<feature type="transmembrane region" description="Helical" evidence="1">
    <location>
        <begin position="325"/>
        <end position="345"/>
    </location>
</feature>
<feature type="transmembrane region" description="Helical" evidence="1">
    <location>
        <begin position="372"/>
        <end position="392"/>
    </location>
</feature>
<feature type="region of interest" description="Disordered" evidence="2">
    <location>
        <begin position="1"/>
        <end position="72"/>
    </location>
</feature>
<feature type="region of interest" description="Disordered" evidence="2">
    <location>
        <begin position="976"/>
        <end position="1061"/>
    </location>
</feature>
<feature type="compositionally biased region" description="Basic and acidic residues" evidence="2">
    <location>
        <begin position="991"/>
        <end position="1013"/>
    </location>
</feature>
<feature type="compositionally biased region" description="Basic and acidic residues" evidence="2">
    <location>
        <begin position="1050"/>
        <end position="1060"/>
    </location>
</feature>
<comment type="subcellular location">
    <subcellularLocation>
        <location evidence="1">Cell membrane</location>
        <topology evidence="1">Multi-pass membrane protein</topology>
    </subcellularLocation>
</comment>
<comment type="similarity">
    <text evidence="1">Belongs to the UPF0182 family.</text>
</comment>
<name>Y641_BIFAA</name>
<keyword id="KW-1003">Cell membrane</keyword>
<keyword id="KW-0472">Membrane</keyword>
<keyword id="KW-1185">Reference proteome</keyword>
<keyword id="KW-0812">Transmembrane</keyword>
<keyword id="KW-1133">Transmembrane helix</keyword>
<dbReference type="EMBL" id="AP009256">
    <property type="protein sequence ID" value="BAF39422.1"/>
    <property type="molecule type" value="Genomic_DNA"/>
</dbReference>
<dbReference type="RefSeq" id="WP_011743071.1">
    <property type="nucleotide sequence ID" value="NC_008618.1"/>
</dbReference>
<dbReference type="SMR" id="A1A139"/>
<dbReference type="STRING" id="367928.BAD_0641"/>
<dbReference type="PaxDb" id="1680-BADO_0685"/>
<dbReference type="GeneID" id="4557346"/>
<dbReference type="KEGG" id="bad:BAD_0641"/>
<dbReference type="HOGENOM" id="CLU_007733_1_0_11"/>
<dbReference type="Proteomes" id="UP000008702">
    <property type="component" value="Chromosome"/>
</dbReference>
<dbReference type="GO" id="GO:0005576">
    <property type="term" value="C:extracellular region"/>
    <property type="evidence" value="ECO:0007669"/>
    <property type="project" value="TreeGrafter"/>
</dbReference>
<dbReference type="GO" id="GO:0005886">
    <property type="term" value="C:plasma membrane"/>
    <property type="evidence" value="ECO:0007669"/>
    <property type="project" value="UniProtKB-SubCell"/>
</dbReference>
<dbReference type="CDD" id="cd06174">
    <property type="entry name" value="MFS"/>
    <property type="match status" value="1"/>
</dbReference>
<dbReference type="HAMAP" id="MF_01600">
    <property type="entry name" value="UPF0182"/>
    <property type="match status" value="1"/>
</dbReference>
<dbReference type="InterPro" id="IPR005372">
    <property type="entry name" value="UPF0182"/>
</dbReference>
<dbReference type="PANTHER" id="PTHR39344">
    <property type="entry name" value="UPF0182 PROTEIN SLL1060"/>
    <property type="match status" value="1"/>
</dbReference>
<dbReference type="PANTHER" id="PTHR39344:SF1">
    <property type="entry name" value="UPF0182 PROTEIN SLL1060"/>
    <property type="match status" value="1"/>
</dbReference>
<dbReference type="Pfam" id="PF03699">
    <property type="entry name" value="UPF0182"/>
    <property type="match status" value="1"/>
</dbReference>
<organism>
    <name type="scientific">Bifidobacterium adolescentis (strain ATCC 15703 / DSM 20083 / NCTC 11814 / E194a)</name>
    <dbReference type="NCBI Taxonomy" id="367928"/>
    <lineage>
        <taxon>Bacteria</taxon>
        <taxon>Bacillati</taxon>
        <taxon>Actinomycetota</taxon>
        <taxon>Actinomycetes</taxon>
        <taxon>Bifidobacteriales</taxon>
        <taxon>Bifidobacteriaceae</taxon>
        <taxon>Bifidobacterium</taxon>
    </lineage>
</organism>
<protein>
    <recommendedName>
        <fullName evidence="1">UPF0182 protein BAD_0641</fullName>
    </recommendedName>
</protein>